<sequence length="49" mass="5613">MDKEAKVKSTGERGIIEAIYPETETVELCYYDGTYDERRFDDVVMATSS</sequence>
<protein>
    <recommendedName>
        <fullName>SPbeta prophage-derived uncharacterized protein YorN</fullName>
    </recommendedName>
</protein>
<keyword id="KW-1185">Reference proteome</keyword>
<name>YORN_BACSU</name>
<feature type="chain" id="PRO_0000360188" description="SPbeta prophage-derived uncharacterized protein YorN">
    <location>
        <begin position="1"/>
        <end position="49"/>
    </location>
</feature>
<reference key="1">
    <citation type="journal article" date="1997" name="Nature">
        <title>The complete genome sequence of the Gram-positive bacterium Bacillus subtilis.</title>
        <authorList>
            <person name="Kunst F."/>
            <person name="Ogasawara N."/>
            <person name="Moszer I."/>
            <person name="Albertini A.M."/>
            <person name="Alloni G."/>
            <person name="Azevedo V."/>
            <person name="Bertero M.G."/>
            <person name="Bessieres P."/>
            <person name="Bolotin A."/>
            <person name="Borchert S."/>
            <person name="Borriss R."/>
            <person name="Boursier L."/>
            <person name="Brans A."/>
            <person name="Braun M."/>
            <person name="Brignell S.C."/>
            <person name="Bron S."/>
            <person name="Brouillet S."/>
            <person name="Bruschi C.V."/>
            <person name="Caldwell B."/>
            <person name="Capuano V."/>
            <person name="Carter N.M."/>
            <person name="Choi S.-K."/>
            <person name="Codani J.-J."/>
            <person name="Connerton I.F."/>
            <person name="Cummings N.J."/>
            <person name="Daniel R.A."/>
            <person name="Denizot F."/>
            <person name="Devine K.M."/>
            <person name="Duesterhoeft A."/>
            <person name="Ehrlich S.D."/>
            <person name="Emmerson P.T."/>
            <person name="Entian K.-D."/>
            <person name="Errington J."/>
            <person name="Fabret C."/>
            <person name="Ferrari E."/>
            <person name="Foulger D."/>
            <person name="Fritz C."/>
            <person name="Fujita M."/>
            <person name="Fujita Y."/>
            <person name="Fuma S."/>
            <person name="Galizzi A."/>
            <person name="Galleron N."/>
            <person name="Ghim S.-Y."/>
            <person name="Glaser P."/>
            <person name="Goffeau A."/>
            <person name="Golightly E.J."/>
            <person name="Grandi G."/>
            <person name="Guiseppi G."/>
            <person name="Guy B.J."/>
            <person name="Haga K."/>
            <person name="Haiech J."/>
            <person name="Harwood C.R."/>
            <person name="Henaut A."/>
            <person name="Hilbert H."/>
            <person name="Holsappel S."/>
            <person name="Hosono S."/>
            <person name="Hullo M.-F."/>
            <person name="Itaya M."/>
            <person name="Jones L.-M."/>
            <person name="Joris B."/>
            <person name="Karamata D."/>
            <person name="Kasahara Y."/>
            <person name="Klaerr-Blanchard M."/>
            <person name="Klein C."/>
            <person name="Kobayashi Y."/>
            <person name="Koetter P."/>
            <person name="Koningstein G."/>
            <person name="Krogh S."/>
            <person name="Kumano M."/>
            <person name="Kurita K."/>
            <person name="Lapidus A."/>
            <person name="Lardinois S."/>
            <person name="Lauber J."/>
            <person name="Lazarevic V."/>
            <person name="Lee S.-M."/>
            <person name="Levine A."/>
            <person name="Liu H."/>
            <person name="Masuda S."/>
            <person name="Mauel C."/>
            <person name="Medigue C."/>
            <person name="Medina N."/>
            <person name="Mellado R.P."/>
            <person name="Mizuno M."/>
            <person name="Moestl D."/>
            <person name="Nakai S."/>
            <person name="Noback M."/>
            <person name="Noone D."/>
            <person name="O'Reilly M."/>
            <person name="Ogawa K."/>
            <person name="Ogiwara A."/>
            <person name="Oudega B."/>
            <person name="Park S.-H."/>
            <person name="Parro V."/>
            <person name="Pohl T.M."/>
            <person name="Portetelle D."/>
            <person name="Porwollik S."/>
            <person name="Prescott A.M."/>
            <person name="Presecan E."/>
            <person name="Pujic P."/>
            <person name="Purnelle B."/>
            <person name="Rapoport G."/>
            <person name="Rey M."/>
            <person name="Reynolds S."/>
            <person name="Rieger M."/>
            <person name="Rivolta C."/>
            <person name="Rocha E."/>
            <person name="Roche B."/>
            <person name="Rose M."/>
            <person name="Sadaie Y."/>
            <person name="Sato T."/>
            <person name="Scanlan E."/>
            <person name="Schleich S."/>
            <person name="Schroeter R."/>
            <person name="Scoffone F."/>
            <person name="Sekiguchi J."/>
            <person name="Sekowska A."/>
            <person name="Seror S.J."/>
            <person name="Serror P."/>
            <person name="Shin B.-S."/>
            <person name="Soldo B."/>
            <person name="Sorokin A."/>
            <person name="Tacconi E."/>
            <person name="Takagi T."/>
            <person name="Takahashi H."/>
            <person name="Takemaru K."/>
            <person name="Takeuchi M."/>
            <person name="Tamakoshi A."/>
            <person name="Tanaka T."/>
            <person name="Terpstra P."/>
            <person name="Tognoni A."/>
            <person name="Tosato V."/>
            <person name="Uchiyama S."/>
            <person name="Vandenbol M."/>
            <person name="Vannier F."/>
            <person name="Vassarotti A."/>
            <person name="Viari A."/>
            <person name="Wambutt R."/>
            <person name="Wedler E."/>
            <person name="Wedler H."/>
            <person name="Weitzenegger T."/>
            <person name="Winters P."/>
            <person name="Wipat A."/>
            <person name="Yamamoto H."/>
            <person name="Yamane K."/>
            <person name="Yasumoto K."/>
            <person name="Yata K."/>
            <person name="Yoshida K."/>
            <person name="Yoshikawa H.-F."/>
            <person name="Zumstein E."/>
            <person name="Yoshikawa H."/>
            <person name="Danchin A."/>
        </authorList>
    </citation>
    <scope>NUCLEOTIDE SEQUENCE [LARGE SCALE GENOMIC DNA]</scope>
    <source>
        <strain>168</strain>
    </source>
</reference>
<dbReference type="EMBL" id="AL009126">
    <property type="protein sequence ID" value="CAB13924.1"/>
    <property type="molecule type" value="Genomic_DNA"/>
</dbReference>
<dbReference type="RefSeq" id="NP_389914.1">
    <property type="nucleotide sequence ID" value="NC_000964.3"/>
</dbReference>
<dbReference type="RefSeq" id="WP_004399415.1">
    <property type="nucleotide sequence ID" value="NZ_OZ025638.1"/>
</dbReference>
<dbReference type="SMR" id="O31900"/>
<dbReference type="FunCoup" id="O31900">
    <property type="interactions" value="75"/>
</dbReference>
<dbReference type="STRING" id="224308.BSU20320"/>
<dbReference type="PaxDb" id="224308-BSU20320"/>
<dbReference type="EnsemblBacteria" id="CAB13924">
    <property type="protein sequence ID" value="CAB13924"/>
    <property type="gene ID" value="BSU_20320"/>
</dbReference>
<dbReference type="GeneID" id="939538"/>
<dbReference type="KEGG" id="bsu:BSU20320"/>
<dbReference type="PATRIC" id="fig|224308.179.peg.2222"/>
<dbReference type="InParanoid" id="O31900"/>
<dbReference type="OrthoDB" id="2897429at2"/>
<dbReference type="BioCyc" id="BSUB:BSU20320-MONOMER"/>
<dbReference type="Proteomes" id="UP000001570">
    <property type="component" value="Chromosome"/>
</dbReference>
<accession>O31900</accession>
<proteinExistence type="predicted"/>
<organism>
    <name type="scientific">Bacillus subtilis (strain 168)</name>
    <dbReference type="NCBI Taxonomy" id="224308"/>
    <lineage>
        <taxon>Bacteria</taxon>
        <taxon>Bacillati</taxon>
        <taxon>Bacillota</taxon>
        <taxon>Bacilli</taxon>
        <taxon>Bacillales</taxon>
        <taxon>Bacillaceae</taxon>
        <taxon>Bacillus</taxon>
    </lineage>
</organism>
<gene>
    <name type="primary">yorN</name>
    <name type="ordered locus">BSU20320</name>
</gene>